<accession>Q9H169</accession>
<accession>B7Z2Z7</accession>
<accession>B7Z4I9</accession>
<accession>D3DSS8</accession>
<accession>D3DSS9</accession>
<accession>G5EA16</accession>
<accession>Q2TAB9</accession>
<comment type="function">
    <text evidence="1">Exhibits microtubule-destabilizing activity.</text>
</comment>
<comment type="interaction">
    <interactant intactId="EBI-20117546">
        <id>Q9H169-2</id>
    </interactant>
    <interactant intactId="EBI-348517">
        <id>O95870</id>
        <label>ABHD16A</label>
    </interactant>
    <organismsDiffer>false</organismsDiffer>
    <experiments>3</experiments>
</comment>
<comment type="interaction">
    <interactant intactId="EBI-20117546">
        <id>Q9H169-2</id>
    </interactant>
    <interactant intactId="EBI-11522760">
        <id>Q6RW13-2</id>
        <label>AGTRAP</label>
    </interactant>
    <organismsDiffer>false</organismsDiffer>
    <experiments>3</experiments>
</comment>
<comment type="interaction">
    <interactant intactId="EBI-20117546">
        <id>Q9H169-2</id>
    </interactant>
    <interactant intactId="EBI-7247651">
        <id>Q96MX0</id>
        <label>CMTM3</label>
    </interactant>
    <organismsDiffer>false</organismsDiffer>
    <experiments>3</experiments>
</comment>
<comment type="interaction">
    <interactant intactId="EBI-20117546">
        <id>Q9H169-2</id>
    </interactant>
    <interactant intactId="EBI-517508">
        <id>Q9NR28</id>
        <label>DIABLO</label>
    </interactant>
    <organismsDiffer>false</organismsDiffer>
    <experiments>3</experiments>
</comment>
<comment type="interaction">
    <interactant intactId="EBI-20117546">
        <id>Q9H169-2</id>
    </interactant>
    <interactant intactId="EBI-750078">
        <id>Q13021</id>
        <label>MALL</label>
    </interactant>
    <organismsDiffer>false</organismsDiffer>
    <experiments>3</experiments>
</comment>
<comment type="interaction">
    <interactant intactId="EBI-20117546">
        <id>Q9H169-2</id>
    </interactant>
    <interactant intactId="EBI-2341610">
        <id>Q9NX47</id>
        <label>MARCHF5</label>
    </interactant>
    <organismsDiffer>false</organismsDiffer>
    <experiments>3</experiments>
</comment>
<comment type="interaction">
    <interactant intactId="EBI-20117546">
        <id>Q9H169-2</id>
    </interactant>
    <interactant intactId="EBI-8652744">
        <id>Q96IW7</id>
        <label>SEC22A</label>
    </interactant>
    <organismsDiffer>false</organismsDiffer>
    <experiments>3</experiments>
</comment>
<comment type="interaction">
    <interactant intactId="EBI-20117546">
        <id>Q9H169-2</id>
    </interactant>
    <interactant intactId="EBI-9679163">
        <id>Q9Y6D0</id>
        <label>SELENOK</label>
    </interactant>
    <organismsDiffer>false</organismsDiffer>
    <experiments>3</experiments>
</comment>
<comment type="interaction">
    <interactant intactId="EBI-20117546">
        <id>Q9H169-2</id>
    </interactant>
    <interactant intactId="EBI-12004298">
        <id>O75971-2</id>
        <label>SNAPC5</label>
    </interactant>
    <organismsDiffer>false</organismsDiffer>
    <experiments>3</experiments>
</comment>
<comment type="interaction">
    <interactant intactId="EBI-20117546">
        <id>Q9H169-2</id>
    </interactant>
    <interactant intactId="EBI-727240">
        <id>Q9UNK0</id>
        <label>STX8</label>
    </interactant>
    <organismsDiffer>false</organismsDiffer>
    <experiments>3</experiments>
</comment>
<comment type="interaction">
    <interactant intactId="EBI-20117546">
        <id>Q9H169-2</id>
    </interactant>
    <interactant intactId="EBI-765817">
        <id>Q9Y228</id>
        <label>TRAF3IP3</label>
    </interactant>
    <organismsDiffer>false</organismsDiffer>
    <experiments>3</experiments>
</comment>
<comment type="interaction">
    <interactant intactId="EBI-20117546">
        <id>Q9H169-2</id>
    </interactant>
    <interactant intactId="EBI-12190699">
        <id>Q6UX27-3</id>
        <label>VSTM1</label>
    </interactant>
    <organismsDiffer>false</organismsDiffer>
    <experiments>3</experiments>
</comment>
<comment type="subcellular location">
    <subcellularLocation>
        <location evidence="1">Golgi apparatus</location>
    </subcellularLocation>
    <subcellularLocation>
        <location evidence="1">Cell projection</location>
        <location evidence="1">Growth cone</location>
    </subcellularLocation>
    <subcellularLocation>
        <location evidence="1">Cell projection</location>
        <location evidence="1">Axon</location>
    </subcellularLocation>
</comment>
<comment type="alternative products">
    <event type="alternative splicing"/>
    <isoform>
        <id>Q9H169-1</id>
        <name>1</name>
        <sequence type="displayed"/>
    </isoform>
    <isoform>
        <id>Q9H169-2</id>
        <name>2</name>
        <sequence type="described" ref="VSP_006279"/>
    </isoform>
    <isoform>
        <id>Q9H169-3</id>
        <name>3</name>
        <sequence type="described" ref="VSP_055279 VSP_055280"/>
    </isoform>
    <isoform>
        <id>Q9H169-4</id>
        <name>4</name>
        <sequence type="described" ref="VSP_006279 VSP_055280"/>
    </isoform>
</comment>
<comment type="similarity">
    <text evidence="9">Belongs to the stathmin family.</text>
</comment>
<protein>
    <recommendedName>
        <fullName>Stathmin-4</fullName>
    </recommendedName>
    <alternativeName>
        <fullName>Stathmin-like protein B3</fullName>
        <shortName>RB3</shortName>
    </alternativeName>
</protein>
<dbReference type="EMBL" id="AJ303455">
    <property type="protein sequence ID" value="CAC22254.1"/>
    <property type="molecule type" value="mRNA"/>
</dbReference>
<dbReference type="EMBL" id="AL136568">
    <property type="protein sequence ID" value="CAB66503.1"/>
    <property type="molecule type" value="mRNA"/>
</dbReference>
<dbReference type="EMBL" id="AK295329">
    <property type="protein sequence ID" value="BAH12033.1"/>
    <property type="molecule type" value="mRNA"/>
</dbReference>
<dbReference type="EMBL" id="AK297415">
    <property type="protein sequence ID" value="BAH12575.1"/>
    <property type="molecule type" value="mRNA"/>
</dbReference>
<dbReference type="EMBL" id="AC090150">
    <property type="status" value="NOT_ANNOTATED_CDS"/>
    <property type="molecule type" value="Genomic_DNA"/>
</dbReference>
<dbReference type="EMBL" id="CH471080">
    <property type="protein sequence ID" value="EAW63562.1"/>
    <property type="molecule type" value="Genomic_DNA"/>
</dbReference>
<dbReference type="EMBL" id="CH471080">
    <property type="protein sequence ID" value="EAW63563.1"/>
    <property type="molecule type" value="Genomic_DNA"/>
</dbReference>
<dbReference type="EMBL" id="CH471080">
    <property type="protein sequence ID" value="EAW63565.1"/>
    <property type="molecule type" value="Genomic_DNA"/>
</dbReference>
<dbReference type="EMBL" id="CH471080">
    <property type="protein sequence ID" value="EAW63567.1"/>
    <property type="molecule type" value="Genomic_DNA"/>
</dbReference>
<dbReference type="EMBL" id="BC011520">
    <property type="protein sequence ID" value="AAH11520.1"/>
    <property type="molecule type" value="mRNA"/>
</dbReference>
<dbReference type="EMBL" id="BC111001">
    <property type="protein sequence ID" value="AAI11002.1"/>
    <property type="molecule type" value="mRNA"/>
</dbReference>
<dbReference type="CCDS" id="CCDS6055.1">
    <molecule id="Q9H169-2"/>
</dbReference>
<dbReference type="CCDS" id="CCDS64851.1">
    <molecule id="Q9H169-3"/>
</dbReference>
<dbReference type="CCDS" id="CCDS64852.1">
    <molecule id="Q9H169-1"/>
</dbReference>
<dbReference type="CCDS" id="CCDS64854.1">
    <molecule id="Q9H169-4"/>
</dbReference>
<dbReference type="RefSeq" id="NP_001269982.1">
    <molecule id="Q9H169-4"/>
    <property type="nucleotide sequence ID" value="NM_001283053.2"/>
</dbReference>
<dbReference type="RefSeq" id="NP_001269983.1">
    <molecule id="Q9H169-1"/>
    <property type="nucleotide sequence ID" value="NM_001283054.2"/>
</dbReference>
<dbReference type="RefSeq" id="NP_001269984.1">
    <molecule id="Q9H169-3"/>
    <property type="nucleotide sequence ID" value="NM_001283055.2"/>
</dbReference>
<dbReference type="RefSeq" id="NP_110422.2">
    <molecule id="Q9H169-2"/>
    <property type="nucleotide sequence ID" value="NM_030795.3"/>
</dbReference>
<dbReference type="PDB" id="6BR1">
    <property type="method" value="X-ray"/>
    <property type="resolution" value="2.30 A"/>
    <property type="chains" value="E=49-189"/>
</dbReference>
<dbReference type="PDB" id="6BRF">
    <property type="method" value="X-ray"/>
    <property type="resolution" value="2.50 A"/>
    <property type="chains" value="E=49-189"/>
</dbReference>
<dbReference type="PDB" id="6BRY">
    <property type="method" value="X-ray"/>
    <property type="resolution" value="2.70 A"/>
    <property type="chains" value="E=49-189"/>
</dbReference>
<dbReference type="PDB" id="6NNG">
    <property type="method" value="X-ray"/>
    <property type="resolution" value="2.40 A"/>
    <property type="chains" value="E=49-189"/>
</dbReference>
<dbReference type="PDB" id="6O5M">
    <property type="method" value="X-ray"/>
    <property type="resolution" value="2.30 A"/>
    <property type="chains" value="E=49-189"/>
</dbReference>
<dbReference type="PDB" id="6O5N">
    <property type="method" value="X-ray"/>
    <property type="resolution" value="3.00 A"/>
    <property type="chains" value="E=49-189"/>
</dbReference>
<dbReference type="PDB" id="6O61">
    <property type="method" value="X-ray"/>
    <property type="resolution" value="2.60 A"/>
    <property type="chains" value="E=49-189"/>
</dbReference>
<dbReference type="PDB" id="6PC4">
    <property type="method" value="X-ray"/>
    <property type="resolution" value="2.60 A"/>
    <property type="chains" value="E=49-189"/>
</dbReference>
<dbReference type="PDB" id="7CPD">
    <property type="method" value="X-ray"/>
    <property type="resolution" value="2.51 A"/>
    <property type="chains" value="E=1-189"/>
</dbReference>
<dbReference type="PDB" id="9F07">
    <property type="method" value="X-ray"/>
    <property type="resolution" value="2.21 A"/>
    <property type="chains" value="C/G=49-185"/>
</dbReference>
<dbReference type="PDBsum" id="6BR1"/>
<dbReference type="PDBsum" id="6BRF"/>
<dbReference type="PDBsum" id="6BRY"/>
<dbReference type="PDBsum" id="6NNG"/>
<dbReference type="PDBsum" id="6O5M"/>
<dbReference type="PDBsum" id="6O5N"/>
<dbReference type="PDBsum" id="6O61"/>
<dbReference type="PDBsum" id="6PC4"/>
<dbReference type="PDBsum" id="7CPD"/>
<dbReference type="PDBsum" id="9F07"/>
<dbReference type="SMR" id="Q9H169"/>
<dbReference type="BioGRID" id="123515">
    <property type="interactions" value="37"/>
</dbReference>
<dbReference type="FunCoup" id="Q9H169">
    <property type="interactions" value="34"/>
</dbReference>
<dbReference type="IntAct" id="Q9H169">
    <property type="interactions" value="31"/>
</dbReference>
<dbReference type="MINT" id="Q9H169"/>
<dbReference type="STRING" id="9606.ENSP00000342538"/>
<dbReference type="DrugBank" id="DB07574">
    <property type="generic name" value="2-MERCAPTO-N-[1,2,3,10-TETRAMETHOXY-9-OXO-5,6,7,9-TETRAHYDRO-BENZO[A]HEPTALEN-7-YL]ACETAMIDE"/>
</dbReference>
<dbReference type="DrugBank" id="DB01206">
    <property type="generic name" value="Lomustine"/>
</dbReference>
<dbReference type="iPTMnet" id="Q9H169"/>
<dbReference type="PhosphoSitePlus" id="Q9H169"/>
<dbReference type="SwissPalm" id="Q9H169"/>
<dbReference type="BioMuta" id="STMN4"/>
<dbReference type="DMDM" id="17368936"/>
<dbReference type="jPOST" id="Q9H169"/>
<dbReference type="MassIVE" id="Q9H169"/>
<dbReference type="PeptideAtlas" id="Q9H169"/>
<dbReference type="ProteomicsDB" id="34108"/>
<dbReference type="ProteomicsDB" id="6479"/>
<dbReference type="ProteomicsDB" id="80368">
    <molecule id="Q9H169-1"/>
</dbReference>
<dbReference type="ProteomicsDB" id="80369">
    <molecule id="Q9H169-2"/>
</dbReference>
<dbReference type="Antibodypedia" id="10084">
    <property type="antibodies" value="151 antibodies from 23 providers"/>
</dbReference>
<dbReference type="DNASU" id="81551"/>
<dbReference type="Ensembl" id="ENST00000265770.11">
    <molecule id="Q9H169-1"/>
    <property type="protein sequence ID" value="ENSP00000265770.7"/>
    <property type="gene ID" value="ENSG00000015592.17"/>
</dbReference>
<dbReference type="Ensembl" id="ENST00000350889.9">
    <molecule id="Q9H169-2"/>
    <property type="protein sequence ID" value="ENSP00000342538.4"/>
    <property type="gene ID" value="ENSG00000015592.17"/>
</dbReference>
<dbReference type="Ensembl" id="ENST00000519997.5">
    <molecule id="Q9H169-3"/>
    <property type="protein sequence ID" value="ENSP00000428474.1"/>
    <property type="gene ID" value="ENSG00000015592.17"/>
</dbReference>
<dbReference type="Ensembl" id="ENST00000523048.5">
    <molecule id="Q9H169-4"/>
    <property type="protein sequence ID" value="ENSP00000428428.1"/>
    <property type="gene ID" value="ENSG00000015592.17"/>
</dbReference>
<dbReference type="GeneID" id="81551"/>
<dbReference type="KEGG" id="hsa:81551"/>
<dbReference type="MANE-Select" id="ENST00000350889.9">
    <molecule id="Q9H169-2"/>
    <property type="protein sequence ID" value="ENSP00000342538.4"/>
    <property type="RefSeq nucleotide sequence ID" value="NM_030795.4"/>
    <property type="RefSeq protein sequence ID" value="NP_110422.2"/>
</dbReference>
<dbReference type="UCSC" id="uc003xfj.5">
    <molecule id="Q9H169-1"/>
    <property type="organism name" value="human"/>
</dbReference>
<dbReference type="AGR" id="HGNC:16078"/>
<dbReference type="CTD" id="81551"/>
<dbReference type="DisGeNET" id="81551"/>
<dbReference type="GeneCards" id="STMN4"/>
<dbReference type="HGNC" id="HGNC:16078">
    <property type="gene designation" value="STMN4"/>
</dbReference>
<dbReference type="HPA" id="ENSG00000015592">
    <property type="expression patterns" value="Tissue enriched (brain)"/>
</dbReference>
<dbReference type="MIM" id="620740">
    <property type="type" value="gene"/>
</dbReference>
<dbReference type="neXtProt" id="NX_Q9H169"/>
<dbReference type="OpenTargets" id="ENSG00000015592"/>
<dbReference type="PharmGKB" id="PA38089"/>
<dbReference type="VEuPathDB" id="HostDB:ENSG00000015592"/>
<dbReference type="GeneTree" id="ENSGT01030000234597"/>
<dbReference type="HOGENOM" id="CLU_102026_0_1_1"/>
<dbReference type="InParanoid" id="Q9H169"/>
<dbReference type="OMA" id="LGWCAIK"/>
<dbReference type="OrthoDB" id="5986631at2759"/>
<dbReference type="PAN-GO" id="Q9H169">
    <property type="GO annotations" value="6 GO annotations based on evolutionary models"/>
</dbReference>
<dbReference type="PhylomeDB" id="Q9H169"/>
<dbReference type="TreeFam" id="TF326935"/>
<dbReference type="PathwayCommons" id="Q9H169"/>
<dbReference type="SignaLink" id="Q9H169"/>
<dbReference type="BioGRID-ORCS" id="81551">
    <property type="hits" value="9 hits in 1148 CRISPR screens"/>
</dbReference>
<dbReference type="GenomeRNAi" id="81551"/>
<dbReference type="Pharos" id="Q9H169">
    <property type="development level" value="Tbio"/>
</dbReference>
<dbReference type="PRO" id="PR:Q9H169"/>
<dbReference type="Proteomes" id="UP000005640">
    <property type="component" value="Chromosome 8"/>
</dbReference>
<dbReference type="RNAct" id="Q9H169">
    <property type="molecule type" value="protein"/>
</dbReference>
<dbReference type="Bgee" id="ENSG00000015592">
    <property type="expression patterns" value="Expressed in cortical plate and 146 other cell types or tissues"/>
</dbReference>
<dbReference type="ExpressionAtlas" id="Q9H169">
    <property type="expression patterns" value="baseline and differential"/>
</dbReference>
<dbReference type="GO" id="GO:0005737">
    <property type="term" value="C:cytoplasm"/>
    <property type="evidence" value="ECO:0000318"/>
    <property type="project" value="GO_Central"/>
</dbReference>
<dbReference type="GO" id="GO:0005794">
    <property type="term" value="C:Golgi apparatus"/>
    <property type="evidence" value="ECO:0007669"/>
    <property type="project" value="UniProtKB-SubCell"/>
</dbReference>
<dbReference type="GO" id="GO:0030426">
    <property type="term" value="C:growth cone"/>
    <property type="evidence" value="ECO:0007669"/>
    <property type="project" value="UniProtKB-SubCell"/>
</dbReference>
<dbReference type="GO" id="GO:0043005">
    <property type="term" value="C:neuron projection"/>
    <property type="evidence" value="ECO:0000318"/>
    <property type="project" value="GO_Central"/>
</dbReference>
<dbReference type="GO" id="GO:0015631">
    <property type="term" value="F:tubulin binding"/>
    <property type="evidence" value="ECO:0000318"/>
    <property type="project" value="GO_Central"/>
</dbReference>
<dbReference type="GO" id="GO:0007019">
    <property type="term" value="P:microtubule depolymerization"/>
    <property type="evidence" value="ECO:0000318"/>
    <property type="project" value="GO_Central"/>
</dbReference>
<dbReference type="GO" id="GO:0031175">
    <property type="term" value="P:neuron projection development"/>
    <property type="evidence" value="ECO:0000318"/>
    <property type="project" value="GO_Central"/>
</dbReference>
<dbReference type="GO" id="GO:0031110">
    <property type="term" value="P:regulation of microtubule polymerization or depolymerization"/>
    <property type="evidence" value="ECO:0000318"/>
    <property type="project" value="GO_Central"/>
</dbReference>
<dbReference type="Gene3D" id="6.10.280.30">
    <property type="match status" value="1"/>
</dbReference>
<dbReference type="InterPro" id="IPR030514">
    <property type="entry name" value="Stathmin_CS"/>
</dbReference>
<dbReference type="InterPro" id="IPR000956">
    <property type="entry name" value="Stathmin_fam"/>
</dbReference>
<dbReference type="InterPro" id="IPR036002">
    <property type="entry name" value="Stathmin_sf"/>
</dbReference>
<dbReference type="PANTHER" id="PTHR10104">
    <property type="entry name" value="STATHMIN"/>
    <property type="match status" value="1"/>
</dbReference>
<dbReference type="PANTHER" id="PTHR10104:SF6">
    <property type="entry name" value="STATHMIN-4"/>
    <property type="match status" value="1"/>
</dbReference>
<dbReference type="Pfam" id="PF00836">
    <property type="entry name" value="Stathmin"/>
    <property type="match status" value="1"/>
</dbReference>
<dbReference type="PIRSF" id="PIRSF002285">
    <property type="entry name" value="Stathmin"/>
    <property type="match status" value="1"/>
</dbReference>
<dbReference type="PRINTS" id="PR00345">
    <property type="entry name" value="STATHMIN"/>
</dbReference>
<dbReference type="SUPFAM" id="SSF101494">
    <property type="entry name" value="Stathmin"/>
    <property type="match status" value="1"/>
</dbReference>
<dbReference type="PROSITE" id="PS00563">
    <property type="entry name" value="STATHMIN_1"/>
    <property type="match status" value="1"/>
</dbReference>
<dbReference type="PROSITE" id="PS01041">
    <property type="entry name" value="STATHMIN_2"/>
    <property type="match status" value="1"/>
</dbReference>
<dbReference type="PROSITE" id="PS51663">
    <property type="entry name" value="STATHMIN_3"/>
    <property type="match status" value="1"/>
</dbReference>
<reference key="1">
    <citation type="submission" date="2001-01" db="EMBL/GenBank/DDBJ databases">
        <title>The nucleotide sequence of the human RB3 gene.</title>
        <authorList>
            <person name="Coadwell W.J."/>
            <person name="Mimmack M.L."/>
        </authorList>
    </citation>
    <scope>NUCLEOTIDE SEQUENCE [MRNA] (ISOFORM 1)</scope>
</reference>
<reference key="2">
    <citation type="journal article" date="2001" name="Genome Res.">
        <title>Towards a catalog of human genes and proteins: sequencing and analysis of 500 novel complete protein coding human cDNAs.</title>
        <authorList>
            <person name="Wiemann S."/>
            <person name="Weil B."/>
            <person name="Wellenreuther R."/>
            <person name="Gassenhuber J."/>
            <person name="Glassl S."/>
            <person name="Ansorge W."/>
            <person name="Boecher M."/>
            <person name="Bloecker H."/>
            <person name="Bauersachs S."/>
            <person name="Blum H."/>
            <person name="Lauber J."/>
            <person name="Duesterhoeft A."/>
            <person name="Beyer A."/>
            <person name="Koehrer K."/>
            <person name="Strack N."/>
            <person name="Mewes H.-W."/>
            <person name="Ottenwaelder B."/>
            <person name="Obermaier B."/>
            <person name="Tampe J."/>
            <person name="Heubner D."/>
            <person name="Wambutt R."/>
            <person name="Korn B."/>
            <person name="Klein M."/>
            <person name="Poustka A."/>
        </authorList>
    </citation>
    <scope>NUCLEOTIDE SEQUENCE [LARGE SCALE MRNA] (ISOFORM 1)</scope>
    <source>
        <tissue>Amygdala</tissue>
    </source>
</reference>
<reference key="3">
    <citation type="journal article" date="2004" name="Nat. Genet.">
        <title>Complete sequencing and characterization of 21,243 full-length human cDNAs.</title>
        <authorList>
            <person name="Ota T."/>
            <person name="Suzuki Y."/>
            <person name="Nishikawa T."/>
            <person name="Otsuki T."/>
            <person name="Sugiyama T."/>
            <person name="Irie R."/>
            <person name="Wakamatsu A."/>
            <person name="Hayashi K."/>
            <person name="Sato H."/>
            <person name="Nagai K."/>
            <person name="Kimura K."/>
            <person name="Makita H."/>
            <person name="Sekine M."/>
            <person name="Obayashi M."/>
            <person name="Nishi T."/>
            <person name="Shibahara T."/>
            <person name="Tanaka T."/>
            <person name="Ishii S."/>
            <person name="Yamamoto J."/>
            <person name="Saito K."/>
            <person name="Kawai Y."/>
            <person name="Isono Y."/>
            <person name="Nakamura Y."/>
            <person name="Nagahari K."/>
            <person name="Murakami K."/>
            <person name="Yasuda T."/>
            <person name="Iwayanagi T."/>
            <person name="Wagatsuma M."/>
            <person name="Shiratori A."/>
            <person name="Sudo H."/>
            <person name="Hosoiri T."/>
            <person name="Kaku Y."/>
            <person name="Kodaira H."/>
            <person name="Kondo H."/>
            <person name="Sugawara M."/>
            <person name="Takahashi M."/>
            <person name="Kanda K."/>
            <person name="Yokoi T."/>
            <person name="Furuya T."/>
            <person name="Kikkawa E."/>
            <person name="Omura Y."/>
            <person name="Abe K."/>
            <person name="Kamihara K."/>
            <person name="Katsuta N."/>
            <person name="Sato K."/>
            <person name="Tanikawa M."/>
            <person name="Yamazaki M."/>
            <person name="Ninomiya K."/>
            <person name="Ishibashi T."/>
            <person name="Yamashita H."/>
            <person name="Murakawa K."/>
            <person name="Fujimori K."/>
            <person name="Tanai H."/>
            <person name="Kimata M."/>
            <person name="Watanabe M."/>
            <person name="Hiraoka S."/>
            <person name="Chiba Y."/>
            <person name="Ishida S."/>
            <person name="Ono Y."/>
            <person name="Takiguchi S."/>
            <person name="Watanabe S."/>
            <person name="Yosida M."/>
            <person name="Hotuta T."/>
            <person name="Kusano J."/>
            <person name="Kanehori K."/>
            <person name="Takahashi-Fujii A."/>
            <person name="Hara H."/>
            <person name="Tanase T.-O."/>
            <person name="Nomura Y."/>
            <person name="Togiya S."/>
            <person name="Komai F."/>
            <person name="Hara R."/>
            <person name="Takeuchi K."/>
            <person name="Arita M."/>
            <person name="Imose N."/>
            <person name="Musashino K."/>
            <person name="Yuuki H."/>
            <person name="Oshima A."/>
            <person name="Sasaki N."/>
            <person name="Aotsuka S."/>
            <person name="Yoshikawa Y."/>
            <person name="Matsunawa H."/>
            <person name="Ichihara T."/>
            <person name="Shiohata N."/>
            <person name="Sano S."/>
            <person name="Moriya S."/>
            <person name="Momiyama H."/>
            <person name="Satoh N."/>
            <person name="Takami S."/>
            <person name="Terashima Y."/>
            <person name="Suzuki O."/>
            <person name="Nakagawa S."/>
            <person name="Senoh A."/>
            <person name="Mizoguchi H."/>
            <person name="Goto Y."/>
            <person name="Shimizu F."/>
            <person name="Wakebe H."/>
            <person name="Hishigaki H."/>
            <person name="Watanabe T."/>
            <person name="Sugiyama A."/>
            <person name="Takemoto M."/>
            <person name="Kawakami B."/>
            <person name="Yamazaki M."/>
            <person name="Watanabe K."/>
            <person name="Kumagai A."/>
            <person name="Itakura S."/>
            <person name="Fukuzumi Y."/>
            <person name="Fujimori Y."/>
            <person name="Komiyama M."/>
            <person name="Tashiro H."/>
            <person name="Tanigami A."/>
            <person name="Fujiwara T."/>
            <person name="Ono T."/>
            <person name="Yamada K."/>
            <person name="Fujii Y."/>
            <person name="Ozaki K."/>
            <person name="Hirao M."/>
            <person name="Ohmori Y."/>
            <person name="Kawabata A."/>
            <person name="Hikiji T."/>
            <person name="Kobatake N."/>
            <person name="Inagaki H."/>
            <person name="Ikema Y."/>
            <person name="Okamoto S."/>
            <person name="Okitani R."/>
            <person name="Kawakami T."/>
            <person name="Noguchi S."/>
            <person name="Itoh T."/>
            <person name="Shigeta K."/>
            <person name="Senba T."/>
            <person name="Matsumura K."/>
            <person name="Nakajima Y."/>
            <person name="Mizuno T."/>
            <person name="Morinaga M."/>
            <person name="Sasaki M."/>
            <person name="Togashi T."/>
            <person name="Oyama M."/>
            <person name="Hata H."/>
            <person name="Watanabe M."/>
            <person name="Komatsu T."/>
            <person name="Mizushima-Sugano J."/>
            <person name="Satoh T."/>
            <person name="Shirai Y."/>
            <person name="Takahashi Y."/>
            <person name="Nakagawa K."/>
            <person name="Okumura K."/>
            <person name="Nagase T."/>
            <person name="Nomura N."/>
            <person name="Kikuchi H."/>
            <person name="Masuho Y."/>
            <person name="Yamashita R."/>
            <person name="Nakai K."/>
            <person name="Yada T."/>
            <person name="Nakamura Y."/>
            <person name="Ohara O."/>
            <person name="Isogai T."/>
            <person name="Sugano S."/>
        </authorList>
    </citation>
    <scope>NUCLEOTIDE SEQUENCE [LARGE SCALE MRNA] (ISOFORMS 3 AND 4)</scope>
    <source>
        <tissue>Brain</tissue>
        <tissue>Caudate nucleus</tissue>
    </source>
</reference>
<reference key="4">
    <citation type="journal article" date="2006" name="Nature">
        <title>DNA sequence and analysis of human chromosome 8.</title>
        <authorList>
            <person name="Nusbaum C."/>
            <person name="Mikkelsen T.S."/>
            <person name="Zody M.C."/>
            <person name="Asakawa S."/>
            <person name="Taudien S."/>
            <person name="Garber M."/>
            <person name="Kodira C.D."/>
            <person name="Schueler M.G."/>
            <person name="Shimizu A."/>
            <person name="Whittaker C.A."/>
            <person name="Chang J.L."/>
            <person name="Cuomo C.A."/>
            <person name="Dewar K."/>
            <person name="FitzGerald M.G."/>
            <person name="Yang X."/>
            <person name="Allen N.R."/>
            <person name="Anderson S."/>
            <person name="Asakawa T."/>
            <person name="Blechschmidt K."/>
            <person name="Bloom T."/>
            <person name="Borowsky M.L."/>
            <person name="Butler J."/>
            <person name="Cook A."/>
            <person name="Corum B."/>
            <person name="DeArellano K."/>
            <person name="DeCaprio D."/>
            <person name="Dooley K.T."/>
            <person name="Dorris L. III"/>
            <person name="Engels R."/>
            <person name="Gloeckner G."/>
            <person name="Hafez N."/>
            <person name="Hagopian D.S."/>
            <person name="Hall J.L."/>
            <person name="Ishikawa S.K."/>
            <person name="Jaffe D.B."/>
            <person name="Kamat A."/>
            <person name="Kudoh J."/>
            <person name="Lehmann R."/>
            <person name="Lokitsang T."/>
            <person name="Macdonald P."/>
            <person name="Major J.E."/>
            <person name="Matthews C.D."/>
            <person name="Mauceli E."/>
            <person name="Menzel U."/>
            <person name="Mihalev A.H."/>
            <person name="Minoshima S."/>
            <person name="Murayama Y."/>
            <person name="Naylor J.W."/>
            <person name="Nicol R."/>
            <person name="Nguyen C."/>
            <person name="O'Leary S.B."/>
            <person name="O'Neill K."/>
            <person name="Parker S.C.J."/>
            <person name="Polley A."/>
            <person name="Raymond C.K."/>
            <person name="Reichwald K."/>
            <person name="Rodriguez J."/>
            <person name="Sasaki T."/>
            <person name="Schilhabel M."/>
            <person name="Siddiqui R."/>
            <person name="Smith C.L."/>
            <person name="Sneddon T.P."/>
            <person name="Talamas J.A."/>
            <person name="Tenzin P."/>
            <person name="Topham K."/>
            <person name="Venkataraman V."/>
            <person name="Wen G."/>
            <person name="Yamazaki S."/>
            <person name="Young S.K."/>
            <person name="Zeng Q."/>
            <person name="Zimmer A.R."/>
            <person name="Rosenthal A."/>
            <person name="Birren B.W."/>
            <person name="Platzer M."/>
            <person name="Shimizu N."/>
            <person name="Lander E.S."/>
        </authorList>
    </citation>
    <scope>NUCLEOTIDE SEQUENCE [LARGE SCALE GENOMIC DNA]</scope>
</reference>
<reference key="5">
    <citation type="submission" date="2005-09" db="EMBL/GenBank/DDBJ databases">
        <authorList>
            <person name="Mural R.J."/>
            <person name="Istrail S."/>
            <person name="Sutton G.G."/>
            <person name="Florea L."/>
            <person name="Halpern A.L."/>
            <person name="Mobarry C.M."/>
            <person name="Lippert R."/>
            <person name="Walenz B."/>
            <person name="Shatkay H."/>
            <person name="Dew I."/>
            <person name="Miller J.R."/>
            <person name="Flanigan M.J."/>
            <person name="Edwards N.J."/>
            <person name="Bolanos R."/>
            <person name="Fasulo D."/>
            <person name="Halldorsson B.V."/>
            <person name="Hannenhalli S."/>
            <person name="Turner R."/>
            <person name="Yooseph S."/>
            <person name="Lu F."/>
            <person name="Nusskern D.R."/>
            <person name="Shue B.C."/>
            <person name="Zheng X.H."/>
            <person name="Zhong F."/>
            <person name="Delcher A.L."/>
            <person name="Huson D.H."/>
            <person name="Kravitz S.A."/>
            <person name="Mouchard L."/>
            <person name="Reinert K."/>
            <person name="Remington K.A."/>
            <person name="Clark A.G."/>
            <person name="Waterman M.S."/>
            <person name="Eichler E.E."/>
            <person name="Adams M.D."/>
            <person name="Hunkapiller M.W."/>
            <person name="Myers E.W."/>
            <person name="Venter J.C."/>
        </authorList>
    </citation>
    <scope>NUCLEOTIDE SEQUENCE [LARGE SCALE GENOMIC DNA]</scope>
</reference>
<reference key="6">
    <citation type="journal article" date="2004" name="Genome Res.">
        <title>The status, quality, and expansion of the NIH full-length cDNA project: the Mammalian Gene Collection (MGC).</title>
        <authorList>
            <consortium name="The MGC Project Team"/>
        </authorList>
    </citation>
    <scope>NUCLEOTIDE SEQUENCE [LARGE SCALE MRNA] (ISOFORMS 1 AND 2)</scope>
    <source>
        <tissue>Brain</tissue>
    </source>
</reference>
<feature type="chain" id="PRO_0000182406" description="Stathmin-4">
    <location>
        <begin position="1"/>
        <end position="189"/>
    </location>
</feature>
<feature type="domain" description="SLD" evidence="5">
    <location>
        <begin position="48"/>
        <end position="189"/>
    </location>
</feature>
<feature type="region of interest" description="Disordered" evidence="6">
    <location>
        <begin position="168"/>
        <end position="189"/>
    </location>
</feature>
<feature type="coiled-coil region" evidence="4">
    <location>
        <begin position="90"/>
        <end position="188"/>
    </location>
</feature>
<feature type="modified residue" description="Phosphoserine" evidence="2">
    <location>
        <position position="90"/>
    </location>
</feature>
<feature type="lipid moiety-binding region" description="S-palmitoyl cysteine" evidence="3">
    <location>
        <position position="20"/>
    </location>
</feature>
<feature type="lipid moiety-binding region" description="S-palmitoyl cysteine" evidence="3">
    <location>
        <position position="22"/>
    </location>
</feature>
<feature type="splice variant" id="VSP_055279" description="In isoform 3." evidence="7">
    <location>
        <begin position="1"/>
        <end position="9"/>
    </location>
</feature>
<feature type="splice variant" id="VSP_006279" description="In isoform 2 and isoform 4." evidence="7 8">
    <original>E</original>
    <variation>EGWCGRQCRRKDESQRKDSADWRERRAQ</variation>
    <location>
        <position position="36"/>
    </location>
</feature>
<feature type="splice variant" id="VSP_055280" description="In isoform 3 and isoform 4." evidence="7">
    <original>DKHAEEVRKNKELKEEAS</original>
    <variation>EPPAA</variation>
    <location>
        <begin position="171"/>
        <end position="188"/>
    </location>
</feature>
<feature type="sequence conflict" description="In Ref. 3; BAH12575." evidence="9" ref="3">
    <original>K</original>
    <variation>M</variation>
    <location>
        <position position="11"/>
    </location>
</feature>
<feature type="strand" evidence="10">
    <location>
        <begin position="51"/>
        <end position="58"/>
    </location>
</feature>
<feature type="strand" evidence="10">
    <location>
        <begin position="61"/>
        <end position="69"/>
    </location>
</feature>
<feature type="helix" evidence="10">
    <location>
        <begin position="91"/>
        <end position="106"/>
    </location>
</feature>
<feature type="helix" evidence="10">
    <location>
        <begin position="158"/>
        <end position="184"/>
    </location>
</feature>
<keyword id="KW-0002">3D-structure</keyword>
<keyword id="KW-0025">Alternative splicing</keyword>
<keyword id="KW-0966">Cell projection</keyword>
<keyword id="KW-0175">Coiled coil</keyword>
<keyword id="KW-0333">Golgi apparatus</keyword>
<keyword id="KW-0449">Lipoprotein</keyword>
<keyword id="KW-0564">Palmitate</keyword>
<keyword id="KW-0597">Phosphoprotein</keyword>
<keyword id="KW-1267">Proteomics identification</keyword>
<keyword id="KW-1185">Reference proteome</keyword>
<evidence type="ECO:0000250" key="1"/>
<evidence type="ECO:0000250" key="2">
    <source>
        <dbReference type="UniProtKB" id="P63043"/>
    </source>
</evidence>
<evidence type="ECO:0000250" key="3">
    <source>
        <dbReference type="UniProtKB" id="Q93045"/>
    </source>
</evidence>
<evidence type="ECO:0000255" key="4"/>
<evidence type="ECO:0000255" key="5">
    <source>
        <dbReference type="PROSITE-ProRule" id="PRU00998"/>
    </source>
</evidence>
<evidence type="ECO:0000256" key="6">
    <source>
        <dbReference type="SAM" id="MobiDB-lite"/>
    </source>
</evidence>
<evidence type="ECO:0000303" key="7">
    <source>
    </source>
</evidence>
<evidence type="ECO:0000303" key="8">
    <source>
    </source>
</evidence>
<evidence type="ECO:0000305" key="9"/>
<evidence type="ECO:0007829" key="10">
    <source>
        <dbReference type="PDB" id="9F07"/>
    </source>
</evidence>
<name>STMN4_HUMAN</name>
<proteinExistence type="evidence at protein level"/>
<gene>
    <name type="primary">STMN4</name>
</gene>
<organism>
    <name type="scientific">Homo sapiens</name>
    <name type="common">Human</name>
    <dbReference type="NCBI Taxonomy" id="9606"/>
    <lineage>
        <taxon>Eukaryota</taxon>
        <taxon>Metazoa</taxon>
        <taxon>Chordata</taxon>
        <taxon>Craniata</taxon>
        <taxon>Vertebrata</taxon>
        <taxon>Euteleostomi</taxon>
        <taxon>Mammalia</taxon>
        <taxon>Eutheria</taxon>
        <taxon>Euarchontoglires</taxon>
        <taxon>Primates</taxon>
        <taxon>Haplorrhini</taxon>
        <taxon>Catarrhini</taxon>
        <taxon>Hominidae</taxon>
        <taxon>Homo</taxon>
    </lineage>
</organism>
<sequence length="189" mass="22071">MTLAAYKEKMKELPLVSLFCSCFLADPLNKSSYKYEADTVDLNWCVISDMEVIELNKCTSGQSFEVILKPPSFDGVPEFNASLPRRRDPSLEEIQKKLEAAEERRKYQEAELLKHLAEKREHEREVIQKAIEENNNFIKMAKEKLAQKMESNKENREAHLAAMLERLQEKDKHAEEVRKNKELKEEASR</sequence>